<keyword id="KW-0963">Cytoplasm</keyword>
<keyword id="KW-0238">DNA-binding</keyword>
<keyword id="KW-0479">Metal-binding</keyword>
<keyword id="KW-0539">Nucleus</keyword>
<keyword id="KW-0597">Phosphoprotein</keyword>
<keyword id="KW-1185">Reference proteome</keyword>
<keyword id="KW-0804">Transcription</keyword>
<keyword id="KW-0805">Transcription regulation</keyword>
<keyword id="KW-0862">Zinc</keyword>
<gene>
    <name type="primary">HAL9</name>
    <name type="ordered locus">YOL089C</name>
    <name type="ORF">O0938</name>
</gene>
<sequence length="1030" mass="117927">MENQGGDYSPNGFSNSASNMNAVFNNEITGRSDISNVNHQTGTPRLVPETQIWSMPVPDQLMTMPNRENTLMTGSTIGPNIPMNVAYPNTIYSPTEHQSQFQTQQNRDISTMMEHTNSNDMSGSGKNLKKRVSKACDHCRKRKIRCDEVDQQTKKCSNCIKFQLPCTFKHRDEILKKKRKLEIKHHATPGESLQTSNSISNPVASSSVPNSGRFELLNGNSPLESNIIDKVSNIQNNLNKKMNSKIEKLDRKMSYIIDSVARLEWLLDKAVKKQEGKYKEKNNLPKPARKIYSTALLTAQKLYWFKQSLGVKASNEEFLSPISEILSISLKWYATQMKKFMDLSSPAFFSSEIILYSLPPKKQAKRLLENFHATLLSSVTGIISLKECLDLAEKYYSESGEKLTYPEHLLLNVCLCSGASATQSIIRGDSKFLRKDRYDPTSQELKKIENVALLNAMYYYHKLSTICSGTRTLQALLLLNRYFQLTYDTELANCILGTAIRLAVDMELNRKSSYKSLDFEEAIRRRRMWWHCFCTDKLYSLMLSRPPIVGERDMDMLTDQNYYEVIKTNILPDLIDKKEDLDKITDVNSALNVVVNFCQHISLFISYYVSKLVSIESKIYSTCFAVRSTLDLSFDAMLDKIKDLNDSLNNWRDNLHVSMKLKSYKQYLSVLYAQKSQENPALSFEIACSRVLNCHFRALYSKVILSMMTTSLLIDNERLYKGSRHDIPQLFILFSSQYLNASKEMLQLFQGINYQAHMYNEVMYQFSTAMFVLFFYVVDNMNDLKKKGEVKEIIDILKKSYDRLVGENDEQLLFDNVKWNTLIVFYSHFLKYVLQRYHALNDSTSIFDSKPYDETITKVIMHSRKIKDETVDQLIMSLKSYGSLHSLQKGNEADLADDGLNTNDISSEDFAEEAPINLFGELSVEILKLLKSHSPISNFGDLSPSSNRKGISDDSSLYPIRSDLTSLVYPIHSSDTGDTLSSGLETPENSNFNSDSGIKEDFEAFRALLPLGKLIYDRDYSFVNTFRDYE</sequence>
<reference key="1">
    <citation type="journal article" date="1995" name="Yeast">
        <title>A 29.425 kb segment on the left arm of yeast chromosome XV contains more than twice as many unknown as known open reading frames.</title>
        <authorList>
            <person name="Zumstein E."/>
            <person name="Pearson B.M."/>
            <person name="Kalogeropoulos A."/>
            <person name="Schweizer M."/>
        </authorList>
    </citation>
    <scope>NUCLEOTIDE SEQUENCE [GENOMIC DNA]</scope>
    <source>
        <strain>ATCC 96604 / S288c / FY1679</strain>
    </source>
</reference>
<reference key="2">
    <citation type="journal article" date="1997" name="Nature">
        <title>The nucleotide sequence of Saccharomyces cerevisiae chromosome XV.</title>
        <authorList>
            <person name="Dujon B."/>
            <person name="Albermann K."/>
            <person name="Aldea M."/>
            <person name="Alexandraki D."/>
            <person name="Ansorge W."/>
            <person name="Arino J."/>
            <person name="Benes V."/>
            <person name="Bohn C."/>
            <person name="Bolotin-Fukuhara M."/>
            <person name="Bordonne R."/>
            <person name="Boyer J."/>
            <person name="Camasses A."/>
            <person name="Casamayor A."/>
            <person name="Casas C."/>
            <person name="Cheret G."/>
            <person name="Cziepluch C."/>
            <person name="Daignan-Fornier B."/>
            <person name="Dang V.-D."/>
            <person name="de Haan M."/>
            <person name="Delius H."/>
            <person name="Durand P."/>
            <person name="Fairhead C."/>
            <person name="Feldmann H."/>
            <person name="Gaillon L."/>
            <person name="Galisson F."/>
            <person name="Gamo F.-J."/>
            <person name="Gancedo C."/>
            <person name="Goffeau A."/>
            <person name="Goulding S.E."/>
            <person name="Grivell L.A."/>
            <person name="Habbig B."/>
            <person name="Hand N.J."/>
            <person name="Hani J."/>
            <person name="Hattenhorst U."/>
            <person name="Hebling U."/>
            <person name="Hernando Y."/>
            <person name="Herrero E."/>
            <person name="Heumann K."/>
            <person name="Hiesel R."/>
            <person name="Hilger F."/>
            <person name="Hofmann B."/>
            <person name="Hollenberg C.P."/>
            <person name="Hughes B."/>
            <person name="Jauniaux J.-C."/>
            <person name="Kalogeropoulos A."/>
            <person name="Katsoulou C."/>
            <person name="Kordes E."/>
            <person name="Lafuente M.J."/>
            <person name="Landt O."/>
            <person name="Louis E.J."/>
            <person name="Maarse A.C."/>
            <person name="Madania A."/>
            <person name="Mannhaupt G."/>
            <person name="Marck C."/>
            <person name="Martin R.P."/>
            <person name="Mewes H.-W."/>
            <person name="Michaux G."/>
            <person name="Paces V."/>
            <person name="Parle-McDermott A.G."/>
            <person name="Pearson B.M."/>
            <person name="Perrin A."/>
            <person name="Pettersson B."/>
            <person name="Poch O."/>
            <person name="Pohl T.M."/>
            <person name="Poirey R."/>
            <person name="Portetelle D."/>
            <person name="Pujol A."/>
            <person name="Purnelle B."/>
            <person name="Ramezani Rad M."/>
            <person name="Rechmann S."/>
            <person name="Schwager C."/>
            <person name="Schweizer M."/>
            <person name="Sor F."/>
            <person name="Sterky F."/>
            <person name="Tarassov I.A."/>
            <person name="Teodoru C."/>
            <person name="Tettelin H."/>
            <person name="Thierry A."/>
            <person name="Tobiasch E."/>
            <person name="Tzermia M."/>
            <person name="Uhlen M."/>
            <person name="Unseld M."/>
            <person name="Valens M."/>
            <person name="Vandenbol M."/>
            <person name="Vetter I."/>
            <person name="Vlcek C."/>
            <person name="Voet M."/>
            <person name="Volckaert G."/>
            <person name="Voss H."/>
            <person name="Wambutt R."/>
            <person name="Wedler H."/>
            <person name="Wiemann S."/>
            <person name="Winsor B."/>
            <person name="Wolfe K.H."/>
            <person name="Zollner A."/>
            <person name="Zumstein E."/>
            <person name="Kleine K."/>
        </authorList>
    </citation>
    <scope>NUCLEOTIDE SEQUENCE [LARGE SCALE GENOMIC DNA]</scope>
    <source>
        <strain>ATCC 204508 / S288c</strain>
    </source>
</reference>
<reference key="3">
    <citation type="journal article" date="2014" name="G3 (Bethesda)">
        <title>The reference genome sequence of Saccharomyces cerevisiae: Then and now.</title>
        <authorList>
            <person name="Engel S.R."/>
            <person name="Dietrich F.S."/>
            <person name="Fisk D.G."/>
            <person name="Binkley G."/>
            <person name="Balakrishnan R."/>
            <person name="Costanzo M.C."/>
            <person name="Dwight S.S."/>
            <person name="Hitz B.C."/>
            <person name="Karra K."/>
            <person name="Nash R.S."/>
            <person name="Weng S."/>
            <person name="Wong E.D."/>
            <person name="Lloyd P."/>
            <person name="Skrzypek M.S."/>
            <person name="Miyasato S.R."/>
            <person name="Simison M."/>
            <person name="Cherry J.M."/>
        </authorList>
    </citation>
    <scope>GENOME REANNOTATION</scope>
    <source>
        <strain>ATCC 204508 / S288c</strain>
    </source>
</reference>
<reference key="4">
    <citation type="journal article" date="1998" name="FEBS Lett.">
        <title>Yeast putative transcription factors involved in salt tolerance.</title>
        <authorList>
            <person name="Mendizabal I."/>
            <person name="Rios G."/>
            <person name="Mulet J.M."/>
            <person name="Serrano R."/>
            <person name="de Larrinoa I.F."/>
        </authorList>
    </citation>
    <scope>FUNCTION</scope>
</reference>
<reference key="5">
    <citation type="journal article" date="2003" name="Nature">
        <title>Global analysis of protein localization in budding yeast.</title>
        <authorList>
            <person name="Huh W.-K."/>
            <person name="Falvo J.V."/>
            <person name="Gerke L.C."/>
            <person name="Carroll A.S."/>
            <person name="Howson R.W."/>
            <person name="Weissman J.S."/>
            <person name="O'Shea E.K."/>
        </authorList>
    </citation>
    <scope>SUBCELLULAR LOCATION [LARGE SCALE ANALYSIS]</scope>
</reference>
<reference key="6">
    <citation type="journal article" date="2003" name="Nature">
        <title>Global analysis of protein expression in yeast.</title>
        <authorList>
            <person name="Ghaemmaghami S."/>
            <person name="Huh W.-K."/>
            <person name="Bower K."/>
            <person name="Howson R.W."/>
            <person name="Belle A."/>
            <person name="Dephoure N."/>
            <person name="O'Shea E.K."/>
            <person name="Weissman J.S."/>
        </authorList>
    </citation>
    <scope>LEVEL OF PROTEIN EXPRESSION [LARGE SCALE ANALYSIS]</scope>
</reference>
<reference key="7">
    <citation type="journal article" date="2007" name="J. Proteome Res.">
        <title>Large-scale phosphorylation analysis of alpha-factor-arrested Saccharomyces cerevisiae.</title>
        <authorList>
            <person name="Li X."/>
            <person name="Gerber S.A."/>
            <person name="Rudner A.D."/>
            <person name="Beausoleil S.A."/>
            <person name="Haas W."/>
            <person name="Villen J."/>
            <person name="Elias J.E."/>
            <person name="Gygi S.P."/>
        </authorList>
    </citation>
    <scope>PHOSPHORYLATION [LARGE SCALE ANALYSIS] AT SER-937</scope>
    <scope>IDENTIFICATION BY MASS SPECTROMETRY [LARGE SCALE ANALYSIS]</scope>
    <source>
        <strain>ADR376</strain>
    </source>
</reference>
<reference key="8">
    <citation type="journal article" date="2008" name="Mol. Cell. Proteomics">
        <title>A multidimensional chromatography technology for in-depth phosphoproteome analysis.</title>
        <authorList>
            <person name="Albuquerque C.P."/>
            <person name="Smolka M.B."/>
            <person name="Payne S.H."/>
            <person name="Bafna V."/>
            <person name="Eng J."/>
            <person name="Zhou H."/>
        </authorList>
    </citation>
    <scope>PHOSPHORYLATION [LARGE SCALE ANALYSIS] AT SER-221</scope>
    <scope>IDENTIFICATION BY MASS SPECTROMETRY [LARGE SCALE ANALYSIS]</scope>
</reference>
<reference key="9">
    <citation type="journal article" date="2009" name="Science">
        <title>Global analysis of Cdk1 substrate phosphorylation sites provides insights into evolution.</title>
        <authorList>
            <person name="Holt L.J."/>
            <person name="Tuch B.B."/>
            <person name="Villen J."/>
            <person name="Johnson A.D."/>
            <person name="Gygi S.P."/>
            <person name="Morgan D.O."/>
        </authorList>
    </citation>
    <scope>IDENTIFICATION BY MASS SPECTROMETRY [LARGE SCALE ANALYSIS]</scope>
</reference>
<dbReference type="EMBL" id="X83121">
    <property type="protein sequence ID" value="CAA58190.1"/>
    <property type="molecule type" value="Genomic_DNA"/>
</dbReference>
<dbReference type="EMBL" id="Z74831">
    <property type="protein sequence ID" value="CAA99101.1"/>
    <property type="molecule type" value="Genomic_DNA"/>
</dbReference>
<dbReference type="EMBL" id="BK006948">
    <property type="protein sequence ID" value="DAA10695.1"/>
    <property type="molecule type" value="Genomic_DNA"/>
</dbReference>
<dbReference type="PIR" id="S57380">
    <property type="entry name" value="S57380"/>
</dbReference>
<dbReference type="RefSeq" id="NP_014552.1">
    <property type="nucleotide sequence ID" value="NM_001183343.1"/>
</dbReference>
<dbReference type="SMR" id="Q12180"/>
<dbReference type="BioGRID" id="34313">
    <property type="interactions" value="113"/>
</dbReference>
<dbReference type="FunCoup" id="Q12180">
    <property type="interactions" value="484"/>
</dbReference>
<dbReference type="IntAct" id="Q12180">
    <property type="interactions" value="18"/>
</dbReference>
<dbReference type="MINT" id="Q12180"/>
<dbReference type="STRING" id="4932.YOL089C"/>
<dbReference type="iPTMnet" id="Q12180"/>
<dbReference type="PaxDb" id="4932-YOL089C"/>
<dbReference type="PeptideAtlas" id="Q12180"/>
<dbReference type="EnsemblFungi" id="YOL089C_mRNA">
    <property type="protein sequence ID" value="YOL089C"/>
    <property type="gene ID" value="YOL089C"/>
</dbReference>
<dbReference type="GeneID" id="854064"/>
<dbReference type="KEGG" id="sce:YOL089C"/>
<dbReference type="AGR" id="SGD:S000005449"/>
<dbReference type="SGD" id="S000005449">
    <property type="gene designation" value="HAL9"/>
</dbReference>
<dbReference type="VEuPathDB" id="FungiDB:YOL089C"/>
<dbReference type="eggNOG" id="ENOG502QZJZ">
    <property type="taxonomic scope" value="Eukaryota"/>
</dbReference>
<dbReference type="GeneTree" id="ENSGT00940000176304"/>
<dbReference type="HOGENOM" id="CLU_008153_0_0_1"/>
<dbReference type="InParanoid" id="Q12180"/>
<dbReference type="OMA" id="DNMARFE"/>
<dbReference type="OrthoDB" id="2123952at2759"/>
<dbReference type="BioCyc" id="YEAST:G3O-33489-MONOMER"/>
<dbReference type="BioGRID-ORCS" id="854064">
    <property type="hits" value="0 hits in 13 CRISPR screens"/>
</dbReference>
<dbReference type="PRO" id="PR:Q12180"/>
<dbReference type="Proteomes" id="UP000002311">
    <property type="component" value="Chromosome XV"/>
</dbReference>
<dbReference type="RNAct" id="Q12180">
    <property type="molecule type" value="protein"/>
</dbReference>
<dbReference type="GO" id="GO:0005739">
    <property type="term" value="C:mitochondrion"/>
    <property type="evidence" value="ECO:0007005"/>
    <property type="project" value="SGD"/>
</dbReference>
<dbReference type="GO" id="GO:0005634">
    <property type="term" value="C:nucleus"/>
    <property type="evidence" value="ECO:0000318"/>
    <property type="project" value="GO_Central"/>
</dbReference>
<dbReference type="GO" id="GO:0000981">
    <property type="term" value="F:DNA-binding transcription factor activity, RNA polymerase II-specific"/>
    <property type="evidence" value="ECO:0000318"/>
    <property type="project" value="GO_Central"/>
</dbReference>
<dbReference type="GO" id="GO:0043565">
    <property type="term" value="F:sequence-specific DNA binding"/>
    <property type="evidence" value="ECO:0007005"/>
    <property type="project" value="SGD"/>
</dbReference>
<dbReference type="GO" id="GO:0008270">
    <property type="term" value="F:zinc ion binding"/>
    <property type="evidence" value="ECO:0007669"/>
    <property type="project" value="InterPro"/>
</dbReference>
<dbReference type="GO" id="GO:0006351">
    <property type="term" value="P:DNA-templated transcription"/>
    <property type="evidence" value="ECO:0007669"/>
    <property type="project" value="InterPro"/>
</dbReference>
<dbReference type="GO" id="GO:0045944">
    <property type="term" value="P:positive regulation of transcription by RNA polymerase II"/>
    <property type="evidence" value="ECO:0000315"/>
    <property type="project" value="SGD"/>
</dbReference>
<dbReference type="GO" id="GO:0009651">
    <property type="term" value="P:response to salt stress"/>
    <property type="evidence" value="ECO:0000315"/>
    <property type="project" value="SGD"/>
</dbReference>
<dbReference type="CDD" id="cd12148">
    <property type="entry name" value="fungal_TF_MHR"/>
    <property type="match status" value="1"/>
</dbReference>
<dbReference type="CDD" id="cd00067">
    <property type="entry name" value="GAL4"/>
    <property type="match status" value="1"/>
</dbReference>
<dbReference type="Gene3D" id="4.10.240.10">
    <property type="entry name" value="Zn(2)-C6 fungal-type DNA-binding domain"/>
    <property type="match status" value="1"/>
</dbReference>
<dbReference type="InterPro" id="IPR050987">
    <property type="entry name" value="AtrR-like"/>
</dbReference>
<dbReference type="InterPro" id="IPR007219">
    <property type="entry name" value="Transcription_factor_dom_fun"/>
</dbReference>
<dbReference type="InterPro" id="IPR036864">
    <property type="entry name" value="Zn2-C6_fun-type_DNA-bd_sf"/>
</dbReference>
<dbReference type="InterPro" id="IPR001138">
    <property type="entry name" value="Zn2Cys6_DnaBD"/>
</dbReference>
<dbReference type="PANTHER" id="PTHR46910:SF3">
    <property type="entry name" value="HALOTOLERANCE PROTEIN 9-RELATED"/>
    <property type="match status" value="1"/>
</dbReference>
<dbReference type="PANTHER" id="PTHR46910">
    <property type="entry name" value="TRANSCRIPTION FACTOR PDR1"/>
    <property type="match status" value="1"/>
</dbReference>
<dbReference type="Pfam" id="PF04082">
    <property type="entry name" value="Fungal_trans"/>
    <property type="match status" value="1"/>
</dbReference>
<dbReference type="Pfam" id="PF00172">
    <property type="entry name" value="Zn_clus"/>
    <property type="match status" value="1"/>
</dbReference>
<dbReference type="SMART" id="SM00906">
    <property type="entry name" value="Fungal_trans"/>
    <property type="match status" value="1"/>
</dbReference>
<dbReference type="SMART" id="SM00066">
    <property type="entry name" value="GAL4"/>
    <property type="match status" value="1"/>
</dbReference>
<dbReference type="SUPFAM" id="SSF57701">
    <property type="entry name" value="Zn2/Cys6 DNA-binding domain"/>
    <property type="match status" value="1"/>
</dbReference>
<dbReference type="PROSITE" id="PS00463">
    <property type="entry name" value="ZN2_CY6_FUNGAL_1"/>
    <property type="match status" value="1"/>
</dbReference>
<dbReference type="PROSITE" id="PS50048">
    <property type="entry name" value="ZN2_CY6_FUNGAL_2"/>
    <property type="match status" value="1"/>
</dbReference>
<feature type="chain" id="PRO_0000233012" description="Halotolerance protein 9">
    <location>
        <begin position="1"/>
        <end position="1030"/>
    </location>
</feature>
<feature type="DNA-binding region" description="Zn(2)-C6 fungal-type" evidence="1">
    <location>
        <begin position="136"/>
        <end position="166"/>
    </location>
</feature>
<feature type="region of interest" description="Disordered" evidence="2">
    <location>
        <begin position="185"/>
        <end position="208"/>
    </location>
</feature>
<feature type="compositionally biased region" description="Low complexity" evidence="2">
    <location>
        <begin position="196"/>
        <end position="208"/>
    </location>
</feature>
<feature type="modified residue" description="Phosphoserine" evidence="7">
    <location>
        <position position="221"/>
    </location>
</feature>
<feature type="modified residue" description="Phosphoserine" evidence="6">
    <location>
        <position position="937"/>
    </location>
</feature>
<evidence type="ECO:0000255" key="1">
    <source>
        <dbReference type="PROSITE-ProRule" id="PRU00227"/>
    </source>
</evidence>
<evidence type="ECO:0000256" key="2">
    <source>
        <dbReference type="SAM" id="MobiDB-lite"/>
    </source>
</evidence>
<evidence type="ECO:0000269" key="3">
    <source>
    </source>
</evidence>
<evidence type="ECO:0000269" key="4">
    <source>
    </source>
</evidence>
<evidence type="ECO:0000269" key="5">
    <source>
    </source>
</evidence>
<evidence type="ECO:0007744" key="6">
    <source>
    </source>
</evidence>
<evidence type="ECO:0007744" key="7">
    <source>
    </source>
</evidence>
<name>HAL9_YEAST</name>
<comment type="function">
    <text evidence="5">Putative transcription factor involved in halotolerance.</text>
</comment>
<comment type="subcellular location">
    <subcellularLocation>
        <location evidence="3">Cytoplasm</location>
    </subcellularLocation>
    <subcellularLocation>
        <location evidence="1 3">Nucleus</location>
    </subcellularLocation>
</comment>
<comment type="miscellaneous">
    <text evidence="4">Present with 238 molecules/cell in log phase SD medium.</text>
</comment>
<organism>
    <name type="scientific">Saccharomyces cerevisiae (strain ATCC 204508 / S288c)</name>
    <name type="common">Baker's yeast</name>
    <dbReference type="NCBI Taxonomy" id="559292"/>
    <lineage>
        <taxon>Eukaryota</taxon>
        <taxon>Fungi</taxon>
        <taxon>Dikarya</taxon>
        <taxon>Ascomycota</taxon>
        <taxon>Saccharomycotina</taxon>
        <taxon>Saccharomycetes</taxon>
        <taxon>Saccharomycetales</taxon>
        <taxon>Saccharomycetaceae</taxon>
        <taxon>Saccharomyces</taxon>
    </lineage>
</organism>
<accession>Q12180</accession>
<accession>D6W1X9</accession>
<proteinExistence type="evidence at protein level"/>
<protein>
    <recommendedName>
        <fullName>Halotolerance protein 9</fullName>
    </recommendedName>
</protein>